<comment type="interaction">
    <interactant intactId="EBI-6425928">
        <id>Q86UP8</id>
    </interactant>
    <interactant intactId="EBI-2130429">
        <id>Q9BYV2</id>
        <label>TRIM54</label>
    </interactant>
    <organismsDiffer>false</organismsDiffer>
    <experiments>3</experiments>
</comment>
<comment type="subcellular location">
    <subcellularLocation>
        <location>Nucleus</location>
    </subcellularLocation>
</comment>
<comment type="alternative products">
    <event type="alternative splicing"/>
    <isoform>
        <id>Q86UP8-1</id>
        <name>1</name>
        <sequence type="displayed"/>
    </isoform>
    <isoform>
        <id>Q86UP8-2</id>
        <name>2</name>
        <sequence type="described" ref="VSP_031600"/>
    </isoform>
    <isoform>
        <id>Q86UP8-3</id>
        <name>3</name>
        <sequence type="described" ref="VSP_031603 VSP_031604"/>
    </isoform>
    <isoform>
        <id>Q86UP8-4</id>
        <name>4</name>
        <sequence type="described" ref="VSP_031598 VSP_031599"/>
    </isoform>
    <isoform>
        <id>Q86UP8-5</id>
        <name>5</name>
        <sequence type="described" ref="VSP_031601 VSP_031602"/>
    </isoform>
    <isoform>
        <id>Q86UP8-6</id>
        <name>6</name>
        <sequence type="described" ref="VSP_031597"/>
    </isoform>
</comment>
<comment type="tissue specificity">
    <text evidence="2">Ubiquitous.</text>
</comment>
<comment type="disease">
    <text evidence="4">GTF2IRD2 is located in the Williams-Beuren syndrome (WBS) critical region. WBS results from a hemizygous deletion of several genes on chromosome 7q11.23, thought to arise as a consequence of unequal crossing over between highly homologous low-copy repeat sequences flanking the deleted region (PubMed:16532385).</text>
</comment>
<comment type="similarity">
    <text evidence="1">Belongs to the TFII-I family.</text>
</comment>
<reference key="1">
    <citation type="journal article" date="2004" name="Eur. J. Hum. Genet.">
        <title>Isolation and characterisation of GTF2IRD2, a novel fusion gene and member of the TFII-I family of transcription factors, deleted in Williams-Beuren syndrome.</title>
        <authorList>
            <person name="Tipney H.J."/>
            <person name="Hinsley T.A."/>
            <person name="Brass A."/>
            <person name="Metcalfe K."/>
            <person name="Donnai D."/>
            <person name="Tassabehji M."/>
        </authorList>
    </citation>
    <scope>NUCLEOTIDE SEQUENCE [MRNA] (ISOFORM 1)</scope>
    <scope>TISSUE SPECIFICITY</scope>
    <scope>VARIANT HIS-514</scope>
</reference>
<reference key="2">
    <citation type="journal article" date="2004" name="Proc. Natl. Acad. Sci. U.S.A.">
        <title>GTF2IRD2 is located in the Williams-Beuren syndrome critical region 7q11.23 and encodes a protein with two TFII-I-like helix-loop-helix repeats.</title>
        <authorList>
            <person name="Makeyev A.V."/>
            <person name="Erdenechimeg L."/>
            <person name="Mungunsukh O."/>
            <person name="Roth J.J."/>
            <person name="Enkhmandakh B."/>
            <person name="Ruddle F.H."/>
            <person name="Bayarsaihan D."/>
        </authorList>
    </citation>
    <scope>NUCLEOTIDE SEQUENCE [MRNA] (ISOFORM 1)</scope>
    <scope>VARIANT HIS-514</scope>
</reference>
<reference key="3">
    <citation type="journal article" date="2004" name="Protein Sci.">
        <title>Comparison of TFII-I gene family members deleted in Williams-Beuren syndrome.</title>
        <authorList>
            <person name="Hinsley T.A."/>
            <person name="Cunliffe P."/>
            <person name="Tipney H.J."/>
            <person name="Brass A."/>
            <person name="Tassabehji M."/>
        </authorList>
    </citation>
    <scope>NUCLEOTIDE SEQUENCE [MRNA] (ISOFORMS 4 AND 5)</scope>
</reference>
<reference key="4">
    <citation type="journal article" date="2003" name="Nature">
        <title>The DNA sequence of human chromosome 7.</title>
        <authorList>
            <person name="Hillier L.W."/>
            <person name="Fulton R.S."/>
            <person name="Fulton L.A."/>
            <person name="Graves T.A."/>
            <person name="Pepin K.H."/>
            <person name="Wagner-McPherson C."/>
            <person name="Layman D."/>
            <person name="Maas J."/>
            <person name="Jaeger S."/>
            <person name="Walker R."/>
            <person name="Wylie K."/>
            <person name="Sekhon M."/>
            <person name="Becker M.C."/>
            <person name="O'Laughlin M.D."/>
            <person name="Schaller M.E."/>
            <person name="Fewell G.A."/>
            <person name="Delehaunty K.D."/>
            <person name="Miner T.L."/>
            <person name="Nash W.E."/>
            <person name="Cordes M."/>
            <person name="Du H."/>
            <person name="Sun H."/>
            <person name="Edwards J."/>
            <person name="Bradshaw-Cordum H."/>
            <person name="Ali J."/>
            <person name="Andrews S."/>
            <person name="Isak A."/>
            <person name="Vanbrunt A."/>
            <person name="Nguyen C."/>
            <person name="Du F."/>
            <person name="Lamar B."/>
            <person name="Courtney L."/>
            <person name="Kalicki J."/>
            <person name="Ozersky P."/>
            <person name="Bielicki L."/>
            <person name="Scott K."/>
            <person name="Holmes A."/>
            <person name="Harkins R."/>
            <person name="Harris A."/>
            <person name="Strong C.M."/>
            <person name="Hou S."/>
            <person name="Tomlinson C."/>
            <person name="Dauphin-Kohlberg S."/>
            <person name="Kozlowicz-Reilly A."/>
            <person name="Leonard S."/>
            <person name="Rohlfing T."/>
            <person name="Rock S.M."/>
            <person name="Tin-Wollam A.-M."/>
            <person name="Abbott A."/>
            <person name="Minx P."/>
            <person name="Maupin R."/>
            <person name="Strowmatt C."/>
            <person name="Latreille P."/>
            <person name="Miller N."/>
            <person name="Johnson D."/>
            <person name="Murray J."/>
            <person name="Woessner J.P."/>
            <person name="Wendl M.C."/>
            <person name="Yang S.-P."/>
            <person name="Schultz B.R."/>
            <person name="Wallis J.W."/>
            <person name="Spieth J."/>
            <person name="Bieri T.A."/>
            <person name="Nelson J.O."/>
            <person name="Berkowicz N."/>
            <person name="Wohldmann P.E."/>
            <person name="Cook L.L."/>
            <person name="Hickenbotham M.T."/>
            <person name="Eldred J."/>
            <person name="Williams D."/>
            <person name="Bedell J.A."/>
            <person name="Mardis E.R."/>
            <person name="Clifton S.W."/>
            <person name="Chissoe S.L."/>
            <person name="Marra M.A."/>
            <person name="Raymond C."/>
            <person name="Haugen E."/>
            <person name="Gillett W."/>
            <person name="Zhou Y."/>
            <person name="James R."/>
            <person name="Phelps K."/>
            <person name="Iadanoto S."/>
            <person name="Bubb K."/>
            <person name="Simms E."/>
            <person name="Levy R."/>
            <person name="Clendenning J."/>
            <person name="Kaul R."/>
            <person name="Kent W.J."/>
            <person name="Furey T.S."/>
            <person name="Baertsch R.A."/>
            <person name="Brent M.R."/>
            <person name="Keibler E."/>
            <person name="Flicek P."/>
            <person name="Bork P."/>
            <person name="Suyama M."/>
            <person name="Bailey J.A."/>
            <person name="Portnoy M.E."/>
            <person name="Torrents D."/>
            <person name="Chinwalla A.T."/>
            <person name="Gish W.R."/>
            <person name="Eddy S.R."/>
            <person name="McPherson J.D."/>
            <person name="Olson M.V."/>
            <person name="Eichler E.E."/>
            <person name="Green E.D."/>
            <person name="Waterston R.H."/>
            <person name="Wilson R.K."/>
        </authorList>
    </citation>
    <scope>NUCLEOTIDE SEQUENCE [LARGE SCALE GENOMIC DNA]</scope>
</reference>
<reference key="5">
    <citation type="journal article" date="2004" name="Nat. Genet.">
        <title>Complete sequencing and characterization of 21,243 full-length human cDNAs.</title>
        <authorList>
            <person name="Ota T."/>
            <person name="Suzuki Y."/>
            <person name="Nishikawa T."/>
            <person name="Otsuki T."/>
            <person name="Sugiyama T."/>
            <person name="Irie R."/>
            <person name="Wakamatsu A."/>
            <person name="Hayashi K."/>
            <person name="Sato H."/>
            <person name="Nagai K."/>
            <person name="Kimura K."/>
            <person name="Makita H."/>
            <person name="Sekine M."/>
            <person name="Obayashi M."/>
            <person name="Nishi T."/>
            <person name="Shibahara T."/>
            <person name="Tanaka T."/>
            <person name="Ishii S."/>
            <person name="Yamamoto J."/>
            <person name="Saito K."/>
            <person name="Kawai Y."/>
            <person name="Isono Y."/>
            <person name="Nakamura Y."/>
            <person name="Nagahari K."/>
            <person name="Murakami K."/>
            <person name="Yasuda T."/>
            <person name="Iwayanagi T."/>
            <person name="Wagatsuma M."/>
            <person name="Shiratori A."/>
            <person name="Sudo H."/>
            <person name="Hosoiri T."/>
            <person name="Kaku Y."/>
            <person name="Kodaira H."/>
            <person name="Kondo H."/>
            <person name="Sugawara M."/>
            <person name="Takahashi M."/>
            <person name="Kanda K."/>
            <person name="Yokoi T."/>
            <person name="Furuya T."/>
            <person name="Kikkawa E."/>
            <person name="Omura Y."/>
            <person name="Abe K."/>
            <person name="Kamihara K."/>
            <person name="Katsuta N."/>
            <person name="Sato K."/>
            <person name="Tanikawa M."/>
            <person name="Yamazaki M."/>
            <person name="Ninomiya K."/>
            <person name="Ishibashi T."/>
            <person name="Yamashita H."/>
            <person name="Murakawa K."/>
            <person name="Fujimori K."/>
            <person name="Tanai H."/>
            <person name="Kimata M."/>
            <person name="Watanabe M."/>
            <person name="Hiraoka S."/>
            <person name="Chiba Y."/>
            <person name="Ishida S."/>
            <person name="Ono Y."/>
            <person name="Takiguchi S."/>
            <person name="Watanabe S."/>
            <person name="Yosida M."/>
            <person name="Hotuta T."/>
            <person name="Kusano J."/>
            <person name="Kanehori K."/>
            <person name="Takahashi-Fujii A."/>
            <person name="Hara H."/>
            <person name="Tanase T.-O."/>
            <person name="Nomura Y."/>
            <person name="Togiya S."/>
            <person name="Komai F."/>
            <person name="Hara R."/>
            <person name="Takeuchi K."/>
            <person name="Arita M."/>
            <person name="Imose N."/>
            <person name="Musashino K."/>
            <person name="Yuuki H."/>
            <person name="Oshima A."/>
            <person name="Sasaki N."/>
            <person name="Aotsuka S."/>
            <person name="Yoshikawa Y."/>
            <person name="Matsunawa H."/>
            <person name="Ichihara T."/>
            <person name="Shiohata N."/>
            <person name="Sano S."/>
            <person name="Moriya S."/>
            <person name="Momiyama H."/>
            <person name="Satoh N."/>
            <person name="Takami S."/>
            <person name="Terashima Y."/>
            <person name="Suzuki O."/>
            <person name="Nakagawa S."/>
            <person name="Senoh A."/>
            <person name="Mizoguchi H."/>
            <person name="Goto Y."/>
            <person name="Shimizu F."/>
            <person name="Wakebe H."/>
            <person name="Hishigaki H."/>
            <person name="Watanabe T."/>
            <person name="Sugiyama A."/>
            <person name="Takemoto M."/>
            <person name="Kawakami B."/>
            <person name="Yamazaki M."/>
            <person name="Watanabe K."/>
            <person name="Kumagai A."/>
            <person name="Itakura S."/>
            <person name="Fukuzumi Y."/>
            <person name="Fujimori Y."/>
            <person name="Komiyama M."/>
            <person name="Tashiro H."/>
            <person name="Tanigami A."/>
            <person name="Fujiwara T."/>
            <person name="Ono T."/>
            <person name="Yamada K."/>
            <person name="Fujii Y."/>
            <person name="Ozaki K."/>
            <person name="Hirao M."/>
            <person name="Ohmori Y."/>
            <person name="Kawabata A."/>
            <person name="Hikiji T."/>
            <person name="Kobatake N."/>
            <person name="Inagaki H."/>
            <person name="Ikema Y."/>
            <person name="Okamoto S."/>
            <person name="Okitani R."/>
            <person name="Kawakami T."/>
            <person name="Noguchi S."/>
            <person name="Itoh T."/>
            <person name="Shigeta K."/>
            <person name="Senba T."/>
            <person name="Matsumura K."/>
            <person name="Nakajima Y."/>
            <person name="Mizuno T."/>
            <person name="Morinaga M."/>
            <person name="Sasaki M."/>
            <person name="Togashi T."/>
            <person name="Oyama M."/>
            <person name="Hata H."/>
            <person name="Watanabe M."/>
            <person name="Komatsu T."/>
            <person name="Mizushima-Sugano J."/>
            <person name="Satoh T."/>
            <person name="Shirai Y."/>
            <person name="Takahashi Y."/>
            <person name="Nakagawa K."/>
            <person name="Okumura K."/>
            <person name="Nagase T."/>
            <person name="Nomura N."/>
            <person name="Kikuchi H."/>
            <person name="Masuho Y."/>
            <person name="Yamashita R."/>
            <person name="Nakai K."/>
            <person name="Yada T."/>
            <person name="Nakamura Y."/>
            <person name="Ohara O."/>
            <person name="Isogai T."/>
            <person name="Sugano S."/>
        </authorList>
    </citation>
    <scope>NUCLEOTIDE SEQUENCE [LARGE SCALE MRNA] (ISOFORMS 1 AND 2)</scope>
    <source>
        <tissue>Brain</tissue>
        <tissue>Uterus</tissue>
    </source>
</reference>
<reference key="6">
    <citation type="journal article" date="2007" name="BMC Genomics">
        <title>The full-ORF clone resource of the German cDNA consortium.</title>
        <authorList>
            <person name="Bechtel S."/>
            <person name="Rosenfelder H."/>
            <person name="Duda A."/>
            <person name="Schmidt C.P."/>
            <person name="Ernst U."/>
            <person name="Wellenreuther R."/>
            <person name="Mehrle A."/>
            <person name="Schuster C."/>
            <person name="Bahr A."/>
            <person name="Bloecker H."/>
            <person name="Heubner D."/>
            <person name="Hoerlein A."/>
            <person name="Michel G."/>
            <person name="Wedler H."/>
            <person name="Koehrer K."/>
            <person name="Ottenwaelder B."/>
            <person name="Poustka A."/>
            <person name="Wiemann S."/>
            <person name="Schupp I."/>
        </authorList>
    </citation>
    <scope>NUCLEOTIDE SEQUENCE [LARGE SCALE MRNA] (ISOFORM 6)</scope>
    <source>
        <tissue>Testis</tissue>
        <tissue>Uterus</tissue>
    </source>
</reference>
<reference key="7">
    <citation type="journal article" date="2004" name="Genome Res.">
        <title>The status, quality, and expansion of the NIH full-length cDNA project: the Mammalian Gene Collection (MGC).</title>
        <authorList>
            <consortium name="The MGC Project Team"/>
        </authorList>
    </citation>
    <scope>NUCLEOTIDE SEQUENCE [LARGE SCALE MRNA] (ISOFORMS 3; 4 AND 5)</scope>
    <source>
        <tissue>Ovary</tissue>
        <tissue>Placenta</tissue>
        <tissue>Uterus</tissue>
    </source>
</reference>
<reference key="8">
    <citation type="journal article" date="2006" name="Am. J. Hum. Genet.">
        <title>Hemizygosity at the NCF1 gene in patients with Williams-Beuren syndrome decreases their risk of hypertension.</title>
        <authorList>
            <person name="Del Campo M."/>
            <person name="Antonell A."/>
            <person name="Magano L.F."/>
            <person name="Munoz F.J."/>
            <person name="Flores R."/>
            <person name="Bayes M."/>
            <person name="Perez Jurado L.A."/>
        </authorList>
    </citation>
    <scope>POTENTIAL INVOLVEMENT IN WILLIAMS-BEUREN SYNDROME</scope>
</reference>
<feature type="chain" id="PRO_0000320120" description="General transcription factor II-I repeat domain-containing protein 2A">
    <location>
        <begin position="1"/>
        <end position="949"/>
    </location>
</feature>
<feature type="repeat" description="GTF2I-like 1">
    <location>
        <begin position="98"/>
        <end position="192"/>
    </location>
</feature>
<feature type="repeat" description="GTF2I-like 2">
    <location>
        <begin position="323"/>
        <end position="417"/>
    </location>
</feature>
<feature type="splice variant" id="VSP_031597" description="In isoform 6." evidence="8">
    <location>
        <begin position="1"/>
        <end position="453"/>
    </location>
</feature>
<feature type="splice variant" id="VSP_031598" description="In isoform 4." evidence="6 7">
    <original>VAEGLCEVKPPCPVNGMQVHSGETEILR</original>
    <variation>RCFNFILCIPNLKRIAGKTSTVFSSKLS</variation>
    <location>
        <begin position="81"/>
        <end position="108"/>
    </location>
</feature>
<feature type="splice variant" id="VSP_031599" description="In isoform 4." evidence="6 7">
    <location>
        <begin position="109"/>
        <end position="949"/>
    </location>
</feature>
<feature type="splice variant" id="VSP_031600" description="In isoform 2." evidence="5 6">
    <location>
        <begin position="182"/>
        <end position="949"/>
    </location>
</feature>
<feature type="splice variant" id="VSP_031601" description="In isoform 5." evidence="6 7">
    <original>ISLKAEAVSVKKESEDPNYYQYNMQGSHPSST</original>
    <variation>GYQDAFRIKYRPSVVAHACNPSNLGGRGRRIT</variation>
    <location>
        <begin position="225"/>
        <end position="256"/>
    </location>
</feature>
<feature type="splice variant" id="VSP_031602" description="In isoform 5." evidence="6 7">
    <location>
        <begin position="257"/>
        <end position="949"/>
    </location>
</feature>
<feature type="splice variant" id="VSP_031603" description="In isoform 3." evidence="7">
    <original>VGKRKIDQEGRVFQEKWERAYFFVEVQNIPTCLICKQSMSVSKEYNLRRHYQTNHSKHYDQYMERMRDEKLHELKKGLRKYLL</original>
    <variation>GLLEAGAGGLLEAGSLRPAWATWQDPISTKNLKISWKQWLTPVAPATWQAEAGGSLELRSLRQQRTIIAILHSSLGDRTRPCL</variation>
    <location>
        <begin position="416"/>
        <end position="498"/>
    </location>
</feature>
<feature type="splice variant" id="VSP_031604" description="In isoform 3." evidence="7">
    <location>
        <begin position="499"/>
        <end position="949"/>
    </location>
</feature>
<feature type="sequence variant" id="VAR_039127" description="In dbSNP:rs2529318." evidence="2 3">
    <original>N</original>
    <variation>H</variation>
    <location>
        <position position="514"/>
    </location>
</feature>
<feature type="sequence conflict" description="In Ref. 2; AAP14955, 3; AAR36866 and 7; AAH47706." evidence="9" ref="2 3 7">
    <original>K</original>
    <variation>E</variation>
    <location>
        <position position="39"/>
    </location>
</feature>
<feature type="sequence conflict" description="In Ref. 1; AAQ19673/AAQ19674 and 2; AAP14955." evidence="9" ref="1 2">
    <original>S</original>
    <variation>L</variation>
    <location>
        <position position="500"/>
    </location>
</feature>
<feature type="sequence conflict" description="In Ref. 1; AAQ19673/AAQ19674, 2; AAP14955, 4; BAF84120 and 5; CAD38788/CAD38861." evidence="9" ref="1 2 4 5">
    <original>N</original>
    <variation>K</variation>
    <location>
        <position position="605"/>
    </location>
</feature>
<feature type="sequence conflict" description="In Ref. 5; CAD38861." evidence="9" ref="5">
    <original>R</original>
    <variation>C</variation>
    <location>
        <position position="716"/>
    </location>
</feature>
<feature type="sequence conflict" description="In Ref. 1; AAQ19673/AAQ19674, 2; AAP14955, 4; BAF84120 and 5; CAD38788/CAD38861." evidence="9" ref="1 2 4 5">
    <original>Q</original>
    <variation>K</variation>
    <location>
        <position position="830"/>
    </location>
</feature>
<accession>Q86UP8</accession>
<accession>A0A0A0MSY2</accession>
<accession>A8K5W6</accession>
<accession>B3KUZ2</accession>
<accession>Q69G40</accession>
<accession>Q6EKI8</accession>
<accession>Q6EKI9</accession>
<accession>Q6NVW2</accession>
<accession>Q6P7N8</accession>
<accession>Q86WX4</accession>
<accession>Q8ND85</accession>
<accession>Q8NDE5</accession>
<evidence type="ECO:0000255" key="1">
    <source>
        <dbReference type="PROSITE-ProRule" id="PRU00484"/>
    </source>
</evidence>
<evidence type="ECO:0000269" key="2">
    <source>
    </source>
</evidence>
<evidence type="ECO:0000269" key="3">
    <source>
    </source>
</evidence>
<evidence type="ECO:0000269" key="4">
    <source>
    </source>
</evidence>
<evidence type="ECO:0000303" key="5">
    <source>
    </source>
</evidence>
<evidence type="ECO:0000303" key="6">
    <source>
    </source>
</evidence>
<evidence type="ECO:0000303" key="7">
    <source>
    </source>
</evidence>
<evidence type="ECO:0000303" key="8">
    <source>
    </source>
</evidence>
<evidence type="ECO:0000305" key="9"/>
<protein>
    <recommendedName>
        <fullName>General transcription factor II-I repeat domain-containing protein 2A</fullName>
        <shortName>GTF2I repeat domain-containing protein 2A</shortName>
    </recommendedName>
    <alternativeName>
        <fullName>Transcription factor GTF2IRD2-alpha</fullName>
    </alternativeName>
</protein>
<sequence length="949" mass="107168">MAQVAVSTLPVEEESSSETRMVVTFLVSALESMCKELAKSKAEVACIAVYETDVFVVGTERGCAFVNARTDFQKDFAKYCVAEGLCEVKPPCPVNGMQVHSGETEILRKAVEDYFCFCYGKALGTTVMVPVPYEKMLRDQSAVVVQGLPEGVAFQHPENYDLATLKWILENKAGISFIINRPFLGPESQLGGPGMVTDAERSIVSPSESCGPINVKTEPMEDSGISLKAEAVSVKKESEDPNYYQYNMQGSHPSSTSNEVIEMELPMEDSTPLVPSEEPNEDPEAEVKIEGNTNSSSVTNSAAGVEDLNIVQVTVPDNEKERLSSIEKIKQLREQVNDLFSRKFGEAIGVDFPVKVPYRKITFNPGCVVIDGMPPGVVFKAPGYLEISSMRRILEAAEFIKFTVIRPLPGLELSNVGKRKIDQEGRVFQEKWERAYFFVEVQNIPTCLICKQSMSVSKEYNLRRHYQTNHSKHYDQYMERMRDEKLHELKKGLRKYLLGSSDTECPEQKQVFANPSPTQKSPVQPVEDLAGNLWEKLREKIRSFVAYSIAIDEITDINNTTQLAIFIRGVDENFDVSEELLDTVPMTGTKSGNEIFSRVEKSLKNFCIDWSKLVSVASTGTPAMVDANNGLVTKLKSRVATFCKGAELKSICCIIHPESLCAQKLKMDHVMDVVVKSVNWICSRGLNHSEFTTLLYELDSQYGSLLYYTEIKWLSRGLVLKRFFESLEEIDSFMSSRGKPLPQLSSIDWIRDLAFLVDMTMHLNALNISLQGHSQIVTQMYDLIRAFLAKLCLWETHLTRNNLAHFPTLKLASRNESDGLNYIPKIAELQTEFQKRLSDFKLYESELTLFSSPFSTKIDSVHEELQMEVIDLQCNTVLKTKYDKVGIPEFYKYLWGSYPKYKHHCAKILSMFGSTYICEQLFSIMKLSKTKYCSQLKDSQWDSVLHIAT</sequence>
<organism>
    <name type="scientific">Homo sapiens</name>
    <name type="common">Human</name>
    <dbReference type="NCBI Taxonomy" id="9606"/>
    <lineage>
        <taxon>Eukaryota</taxon>
        <taxon>Metazoa</taxon>
        <taxon>Chordata</taxon>
        <taxon>Craniata</taxon>
        <taxon>Vertebrata</taxon>
        <taxon>Euteleostomi</taxon>
        <taxon>Mammalia</taxon>
        <taxon>Eutheria</taxon>
        <taxon>Euarchontoglires</taxon>
        <taxon>Primates</taxon>
        <taxon>Haplorrhini</taxon>
        <taxon>Catarrhini</taxon>
        <taxon>Hominidae</taxon>
        <taxon>Homo</taxon>
    </lineage>
</organism>
<dbReference type="EMBL" id="AY312853">
    <property type="protein sequence ID" value="AAQ19673.1"/>
    <property type="molecule type" value="mRNA"/>
</dbReference>
<dbReference type="EMBL" id="AY312854">
    <property type="protein sequence ID" value="AAQ19674.1"/>
    <property type="molecule type" value="mRNA"/>
</dbReference>
<dbReference type="EMBL" id="AY260739">
    <property type="protein sequence ID" value="AAP14955.1"/>
    <property type="molecule type" value="mRNA"/>
</dbReference>
<dbReference type="EMBL" id="AY336979">
    <property type="protein sequence ID" value="AAR36865.1"/>
    <property type="molecule type" value="mRNA"/>
</dbReference>
<dbReference type="EMBL" id="AY336980">
    <property type="protein sequence ID" value="AAR36866.1"/>
    <property type="molecule type" value="mRNA"/>
</dbReference>
<dbReference type="EMBL" id="AY336981">
    <property type="protein sequence ID" value="AAR36867.1"/>
    <property type="molecule type" value="mRNA"/>
</dbReference>
<dbReference type="EMBL" id="AC211424">
    <property type="status" value="NOT_ANNOTATED_CDS"/>
    <property type="molecule type" value="Genomic_DNA"/>
</dbReference>
<dbReference type="EMBL" id="AC211433">
    <property type="status" value="NOT_ANNOTATED_CDS"/>
    <property type="molecule type" value="Genomic_DNA"/>
</dbReference>
<dbReference type="EMBL" id="AK098269">
    <property type="protein sequence ID" value="BAG53604.1"/>
    <property type="molecule type" value="mRNA"/>
</dbReference>
<dbReference type="EMBL" id="AK291431">
    <property type="protein sequence ID" value="BAF84120.1"/>
    <property type="molecule type" value="mRNA"/>
</dbReference>
<dbReference type="EMBL" id="AL833932">
    <property type="protein sequence ID" value="CAD38788.2"/>
    <property type="molecule type" value="mRNA"/>
</dbReference>
<dbReference type="EMBL" id="AL834153">
    <property type="protein sequence ID" value="CAD38861.1"/>
    <property type="molecule type" value="mRNA"/>
</dbReference>
<dbReference type="EMBL" id="BC047706">
    <property type="protein sequence ID" value="AAH47706.1"/>
    <property type="molecule type" value="mRNA"/>
</dbReference>
<dbReference type="EMBL" id="BC061590">
    <property type="protein sequence ID" value="AAH61590.1"/>
    <property type="molecule type" value="mRNA"/>
</dbReference>
<dbReference type="EMBL" id="BC067859">
    <property type="protein sequence ID" value="AAH67859.1"/>
    <property type="molecule type" value="mRNA"/>
</dbReference>
<dbReference type="CCDS" id="CCDS5576.1">
    <molecule id="Q86UP8-1"/>
</dbReference>
<dbReference type="CCDS" id="CCDS64682.1">
    <molecule id="Q86UP8-4"/>
</dbReference>
<dbReference type="RefSeq" id="NP_001268376.1">
    <molecule id="Q86UP8-4"/>
    <property type="nucleotide sequence ID" value="NM_001281447.3"/>
</dbReference>
<dbReference type="RefSeq" id="NP_775808.3">
    <molecule id="Q86UP8-1"/>
    <property type="nucleotide sequence ID" value="NM_173537.3"/>
</dbReference>
<dbReference type="SMR" id="Q86UP8"/>
<dbReference type="BioGRID" id="123920">
    <property type="interactions" value="14"/>
</dbReference>
<dbReference type="FunCoup" id="Q86UP8">
    <property type="interactions" value="211"/>
</dbReference>
<dbReference type="IntAct" id="Q86UP8">
    <property type="interactions" value="14"/>
</dbReference>
<dbReference type="STRING" id="9606.ENSP00000406723"/>
<dbReference type="GlyGen" id="Q86UP8">
    <property type="glycosylation" value="2 sites, 1 O-linked glycan (1 site)"/>
</dbReference>
<dbReference type="iPTMnet" id="Q86UP8"/>
<dbReference type="PhosphoSitePlus" id="Q86UP8"/>
<dbReference type="BioMuta" id="GTF2IRD2"/>
<dbReference type="DMDM" id="187607027"/>
<dbReference type="jPOST" id="Q86UP8"/>
<dbReference type="MassIVE" id="Q86UP8"/>
<dbReference type="PaxDb" id="9606-ENSP00000406723"/>
<dbReference type="PeptideAtlas" id="Q86UP8"/>
<dbReference type="Antibodypedia" id="28921">
    <property type="antibodies" value="77 antibodies from 16 providers"/>
</dbReference>
<dbReference type="DNASU" id="84163"/>
<dbReference type="Ensembl" id="ENST00000451013.7">
    <molecule id="Q86UP8-1"/>
    <property type="protein sequence ID" value="ENSP00000406723.3"/>
    <property type="gene ID" value="ENSG00000196275.16"/>
</dbReference>
<dbReference type="Ensembl" id="ENST00000614386.1">
    <molecule id="Q86UP8-4"/>
    <property type="protein sequence ID" value="ENSP00000481017.1"/>
    <property type="gene ID" value="ENSG00000196275.16"/>
</dbReference>
<dbReference type="GeneID" id="84163"/>
<dbReference type="KEGG" id="hsa:84163"/>
<dbReference type="MANE-Select" id="ENST00000451013.7">
    <property type="protein sequence ID" value="ENSP00000406723.3"/>
    <property type="RefSeq nucleotide sequence ID" value="NM_173537.5"/>
    <property type="RefSeq protein sequence ID" value="NP_775808.4"/>
</dbReference>
<dbReference type="UCSC" id="uc003ubh.5">
    <molecule id="Q86UP8-1"/>
    <property type="organism name" value="human"/>
</dbReference>
<dbReference type="AGR" id="HGNC:30775"/>
<dbReference type="CTD" id="84163"/>
<dbReference type="DisGeNET" id="84163"/>
<dbReference type="GeneCards" id="GTF2IRD2"/>
<dbReference type="HGNC" id="HGNC:30775">
    <property type="gene designation" value="GTF2IRD2"/>
</dbReference>
<dbReference type="HPA" id="ENSG00000196275">
    <property type="expression patterns" value="Low tissue specificity"/>
</dbReference>
<dbReference type="MalaCards" id="GTF2IRD2"/>
<dbReference type="MIM" id="608899">
    <property type="type" value="gene"/>
</dbReference>
<dbReference type="neXtProt" id="NX_Q86UP8"/>
<dbReference type="OpenTargets" id="ENSG00000196275"/>
<dbReference type="Orphanet" id="904">
    <property type="disease" value="Williams syndrome"/>
</dbReference>
<dbReference type="PharmGKB" id="PA162390407"/>
<dbReference type="VEuPathDB" id="HostDB:ENSG00000196275"/>
<dbReference type="eggNOG" id="ENOG502QS6T">
    <property type="taxonomic scope" value="Eukaryota"/>
</dbReference>
<dbReference type="GeneTree" id="ENSGT00940000162266"/>
<dbReference type="HOGENOM" id="CLU_176658_0_0_1"/>
<dbReference type="InParanoid" id="Q86UP8"/>
<dbReference type="OMA" id="VAMVCKG"/>
<dbReference type="OrthoDB" id="10061052at2759"/>
<dbReference type="PAN-GO" id="Q86UP8">
    <property type="GO annotations" value="1 GO annotation based on evolutionary models"/>
</dbReference>
<dbReference type="PhylomeDB" id="Q86UP8"/>
<dbReference type="TreeFam" id="TF352524"/>
<dbReference type="PathwayCommons" id="Q86UP8"/>
<dbReference type="SignaLink" id="Q86UP8"/>
<dbReference type="BioGRID-ORCS" id="84163">
    <property type="hits" value="62 hits in 1007 CRISPR screens"/>
</dbReference>
<dbReference type="ChiTaRS" id="GTF2IRD2">
    <property type="organism name" value="human"/>
</dbReference>
<dbReference type="GenomeRNAi" id="84163"/>
<dbReference type="Pharos" id="Q86UP8">
    <property type="development level" value="Tbio"/>
</dbReference>
<dbReference type="PRO" id="PR:Q86UP8"/>
<dbReference type="Proteomes" id="UP000005640">
    <property type="component" value="Chromosome 7"/>
</dbReference>
<dbReference type="RNAct" id="Q86UP8">
    <property type="molecule type" value="protein"/>
</dbReference>
<dbReference type="Bgee" id="ENSG00000196275">
    <property type="expression patterns" value="Expressed in right uterine tube and 96 other cell types or tissues"/>
</dbReference>
<dbReference type="ExpressionAtlas" id="Q86UP8">
    <property type="expression patterns" value="baseline and differential"/>
</dbReference>
<dbReference type="GO" id="GO:0005634">
    <property type="term" value="C:nucleus"/>
    <property type="evidence" value="ECO:0000318"/>
    <property type="project" value="GO_Central"/>
</dbReference>
<dbReference type="GO" id="GO:0003677">
    <property type="term" value="F:DNA binding"/>
    <property type="evidence" value="ECO:0007669"/>
    <property type="project" value="UniProtKB-KW"/>
</dbReference>
<dbReference type="GO" id="GO:0000981">
    <property type="term" value="F:DNA-binding transcription factor activity, RNA polymerase II-specific"/>
    <property type="evidence" value="ECO:0000303"/>
    <property type="project" value="ARUK-UCL"/>
</dbReference>
<dbReference type="FunFam" id="3.90.1460.10:FF:000002">
    <property type="entry name" value="General transcription factor II-I isoform 1"/>
    <property type="match status" value="1"/>
</dbReference>
<dbReference type="FunFam" id="3.90.1460.10:FF:000003">
    <property type="entry name" value="general transcription factor II-I isoform X1"/>
    <property type="match status" value="1"/>
</dbReference>
<dbReference type="Gene3D" id="3.90.1460.10">
    <property type="entry name" value="GTF2I-like"/>
    <property type="match status" value="2"/>
</dbReference>
<dbReference type="InterPro" id="IPR004212">
    <property type="entry name" value="GTF2I"/>
</dbReference>
<dbReference type="InterPro" id="IPR036647">
    <property type="entry name" value="GTF2I-like_rpt_sf"/>
</dbReference>
<dbReference type="InterPro" id="IPR042224">
    <property type="entry name" value="GTF2IRD2"/>
</dbReference>
<dbReference type="InterPro" id="IPR012337">
    <property type="entry name" value="RNaseH-like_sf"/>
</dbReference>
<dbReference type="PANTHER" id="PTHR47831">
    <property type="entry name" value="GENERAL TRANSCRIPTION FACTOR II-I REPEAT DOMAIN-CONTAINING PROTEIN 2"/>
    <property type="match status" value="1"/>
</dbReference>
<dbReference type="PANTHER" id="PTHR47831:SF1">
    <property type="entry name" value="GENERAL TRANSCRIPTION FACTOR II-I REPEAT DOMAIN-CONTAINING PROTEIN 2A-RELATED"/>
    <property type="match status" value="1"/>
</dbReference>
<dbReference type="Pfam" id="PF02946">
    <property type="entry name" value="GTF2I"/>
    <property type="match status" value="2"/>
</dbReference>
<dbReference type="SUPFAM" id="SSF117773">
    <property type="entry name" value="GTF2I-like repeat"/>
    <property type="match status" value="2"/>
</dbReference>
<dbReference type="SUPFAM" id="SSF53098">
    <property type="entry name" value="Ribonuclease H-like"/>
    <property type="match status" value="1"/>
</dbReference>
<dbReference type="PROSITE" id="PS51139">
    <property type="entry name" value="GTF2I"/>
    <property type="match status" value="2"/>
</dbReference>
<proteinExistence type="evidence at protein level"/>
<name>GTD2A_HUMAN</name>
<gene>
    <name type="primary">GTF2IRD2</name>
    <name type="synonym">GTF2IRD2A</name>
</gene>
<keyword id="KW-0025">Alternative splicing</keyword>
<keyword id="KW-0238">DNA-binding</keyword>
<keyword id="KW-0539">Nucleus</keyword>
<keyword id="KW-1185">Reference proteome</keyword>
<keyword id="KW-0677">Repeat</keyword>
<keyword id="KW-0804">Transcription</keyword>
<keyword id="KW-0805">Transcription regulation</keyword>
<keyword id="KW-0856">Williams-Beuren syndrome</keyword>